<evidence type="ECO:0000250" key="1">
    <source>
        <dbReference type="UniProtKB" id="P0C870"/>
    </source>
</evidence>
<evidence type="ECO:0000255" key="2">
    <source>
        <dbReference type="PROSITE-ProRule" id="PRU00538"/>
    </source>
</evidence>
<evidence type="ECO:0000269" key="3">
    <source>
    </source>
</evidence>
<evidence type="ECO:0000269" key="4">
    <source>
    </source>
</evidence>
<evidence type="ECO:0000269" key="5">
    <source>
    </source>
</evidence>
<evidence type="ECO:0000269" key="6">
    <source>
    </source>
</evidence>
<evidence type="ECO:0000305" key="7"/>
<evidence type="ECO:0000305" key="8">
    <source>
    </source>
</evidence>
<evidence type="ECO:0000312" key="9">
    <source>
        <dbReference type="EMBL" id="AAM52625.1"/>
    </source>
</evidence>
<evidence type="ECO:0000312" key="10">
    <source>
        <dbReference type="FlyBase" id="FBgn0036366"/>
    </source>
</evidence>
<evidence type="ECO:0000312" key="11">
    <source>
        <dbReference type="Proteomes" id="UP000000803"/>
    </source>
</evidence>
<evidence type="ECO:0007744" key="12">
    <source>
        <dbReference type="PDB" id="7YXG"/>
    </source>
</evidence>
<evidence type="ECO:0007744" key="13">
    <source>
        <dbReference type="PDB" id="7YXH"/>
    </source>
</evidence>
<evidence type="ECO:0007744" key="14">
    <source>
        <dbReference type="PDB" id="7YXI"/>
    </source>
</evidence>
<evidence type="ECO:0007744" key="15">
    <source>
        <dbReference type="PDB" id="7YXJ"/>
    </source>
</evidence>
<evidence type="ECO:0007744" key="16">
    <source>
        <dbReference type="PDB" id="7YXK"/>
    </source>
</evidence>
<evidence type="ECO:0007744" key="17">
    <source>
        <dbReference type="PDB" id="7YXL"/>
    </source>
</evidence>
<accession>Q9VU77</accession>
<dbReference type="EC" id="1.14.11.63" evidence="6"/>
<dbReference type="EC" id="3.4.-.-" evidence="1"/>
<dbReference type="EMBL" id="AE014296">
    <property type="protein sequence ID" value="AAF49813.1"/>
    <property type="molecule type" value="Genomic_DNA"/>
</dbReference>
<dbReference type="EMBL" id="AY122113">
    <property type="protein sequence ID" value="AAM52625.1"/>
    <property type="molecule type" value="mRNA"/>
</dbReference>
<dbReference type="RefSeq" id="NP_648651.1">
    <property type="nucleotide sequence ID" value="NM_140394.2"/>
</dbReference>
<dbReference type="PDB" id="7YXG">
    <property type="method" value="X-ray"/>
    <property type="resolution" value="1.64 A"/>
    <property type="chains" value="A/B=1-316"/>
</dbReference>
<dbReference type="PDB" id="7YXH">
    <property type="method" value="X-ray"/>
    <property type="resolution" value="2.30 A"/>
    <property type="chains" value="A/B=1-316"/>
</dbReference>
<dbReference type="PDB" id="7YXI">
    <property type="method" value="X-ray"/>
    <property type="resolution" value="2.10 A"/>
    <property type="chains" value="A/B=1-316"/>
</dbReference>
<dbReference type="PDB" id="7YXJ">
    <property type="method" value="X-ray"/>
    <property type="resolution" value="2.45 A"/>
    <property type="chains" value="A/B/C/D=1-316"/>
</dbReference>
<dbReference type="PDB" id="7YXK">
    <property type="method" value="X-ray"/>
    <property type="resolution" value="2.43 A"/>
    <property type="chains" value="A/B=1-316"/>
</dbReference>
<dbReference type="PDB" id="7YXL">
    <property type="method" value="X-ray"/>
    <property type="resolution" value="2.20 A"/>
    <property type="chains" value="A/B=1-316"/>
</dbReference>
<dbReference type="PDBsum" id="7YXG"/>
<dbReference type="PDBsum" id="7YXH"/>
<dbReference type="PDBsum" id="7YXI"/>
<dbReference type="PDBsum" id="7YXJ"/>
<dbReference type="PDBsum" id="7YXK"/>
<dbReference type="PDBsum" id="7YXL"/>
<dbReference type="SMR" id="Q9VU77"/>
<dbReference type="FunCoup" id="Q9VU77">
    <property type="interactions" value="1354"/>
</dbReference>
<dbReference type="IntAct" id="Q9VU77">
    <property type="interactions" value="6"/>
</dbReference>
<dbReference type="STRING" id="7227.FBpp0075567"/>
<dbReference type="PaxDb" id="7227-FBpp0075567"/>
<dbReference type="DNASU" id="39514"/>
<dbReference type="EnsemblMetazoa" id="FBtr0075825">
    <property type="protein sequence ID" value="FBpp0075567"/>
    <property type="gene ID" value="FBgn0036366"/>
</dbReference>
<dbReference type="GeneID" id="39514"/>
<dbReference type="KEGG" id="dme:Dmel_CG10133"/>
<dbReference type="UCSC" id="CG10133-RA">
    <property type="organism name" value="d. melanogaster"/>
</dbReference>
<dbReference type="AGR" id="FB:FBgn0036366"/>
<dbReference type="CTD" id="100137047"/>
<dbReference type="FlyBase" id="FBgn0036366">
    <property type="gene designation" value="JMJD7"/>
</dbReference>
<dbReference type="VEuPathDB" id="VectorBase:FBgn0036366"/>
<dbReference type="eggNOG" id="KOG2508">
    <property type="taxonomic scope" value="Eukaryota"/>
</dbReference>
<dbReference type="GeneTree" id="ENSGT00900000141196"/>
<dbReference type="HOGENOM" id="CLU_016785_6_0_1"/>
<dbReference type="OMA" id="YWHDMEF"/>
<dbReference type="OrthoDB" id="2945786at2759"/>
<dbReference type="BRENDA" id="1.14.11.63">
    <property type="organism ID" value="1994"/>
</dbReference>
<dbReference type="Reactome" id="R-DME-9629569">
    <property type="pathway name" value="Protein hydroxylation"/>
</dbReference>
<dbReference type="BioGRID-ORCS" id="39514">
    <property type="hits" value="0 hits in 3 CRISPR screens"/>
</dbReference>
<dbReference type="Proteomes" id="UP000000803">
    <property type="component" value="Chromosome 3L"/>
</dbReference>
<dbReference type="Bgee" id="FBgn0036366">
    <property type="expression patterns" value="Expressed in secondary oocyte and 53 other cell types or tissues"/>
</dbReference>
<dbReference type="GO" id="GO:0005737">
    <property type="term" value="C:cytoplasm"/>
    <property type="evidence" value="ECO:0000314"/>
    <property type="project" value="FlyBase"/>
</dbReference>
<dbReference type="GO" id="GO:0005634">
    <property type="term" value="C:nucleus"/>
    <property type="evidence" value="ECO:0007669"/>
    <property type="project" value="UniProtKB-SubCell"/>
</dbReference>
<dbReference type="GO" id="GO:0016706">
    <property type="term" value="F:2-oxoglutarate-dependent dioxygenase activity"/>
    <property type="evidence" value="ECO:0000318"/>
    <property type="project" value="GO_Central"/>
</dbReference>
<dbReference type="GO" id="GO:0004175">
    <property type="term" value="F:endopeptidase activity"/>
    <property type="evidence" value="ECO:0000318"/>
    <property type="project" value="GO_Central"/>
</dbReference>
<dbReference type="GO" id="GO:0008198">
    <property type="term" value="F:ferrous iron binding"/>
    <property type="evidence" value="ECO:0000314"/>
    <property type="project" value="UniProtKB"/>
</dbReference>
<dbReference type="GO" id="GO:0042802">
    <property type="term" value="F:identical protein binding"/>
    <property type="evidence" value="ECO:0000353"/>
    <property type="project" value="UniProtKB"/>
</dbReference>
<dbReference type="GO" id="GO:0106155">
    <property type="term" value="F:peptidyl-lysine 3-dioxygenase activity"/>
    <property type="evidence" value="ECO:0000314"/>
    <property type="project" value="UniProtKB"/>
</dbReference>
<dbReference type="GO" id="GO:0048512">
    <property type="term" value="P:circadian behavior"/>
    <property type="evidence" value="ECO:0000315"/>
    <property type="project" value="UniProtKB"/>
</dbReference>
<dbReference type="FunFam" id="2.60.120.10:FF:000059">
    <property type="entry name" value="jmjC domain-containing protein 7"/>
    <property type="match status" value="1"/>
</dbReference>
<dbReference type="Gene3D" id="2.60.120.10">
    <property type="entry name" value="Jelly Rolls"/>
    <property type="match status" value="1"/>
</dbReference>
<dbReference type="InterPro" id="IPR041667">
    <property type="entry name" value="Cupin_8"/>
</dbReference>
<dbReference type="InterPro" id="IPR003347">
    <property type="entry name" value="JmjC_dom"/>
</dbReference>
<dbReference type="InterPro" id="IPR014710">
    <property type="entry name" value="RmlC-like_jellyroll"/>
</dbReference>
<dbReference type="PANTHER" id="PTHR12461:SF99">
    <property type="entry name" value="BIFUNCTIONAL PEPTIDASE AND (3S)-LYSYL HYDROXYLASE JMJD7"/>
    <property type="match status" value="1"/>
</dbReference>
<dbReference type="PANTHER" id="PTHR12461">
    <property type="entry name" value="HYPOXIA-INDUCIBLE FACTOR 1 ALPHA INHIBITOR-RELATED"/>
    <property type="match status" value="1"/>
</dbReference>
<dbReference type="Pfam" id="PF13621">
    <property type="entry name" value="Cupin_8"/>
    <property type="match status" value="1"/>
</dbReference>
<dbReference type="SMART" id="SM00558">
    <property type="entry name" value="JmjC"/>
    <property type="match status" value="1"/>
</dbReference>
<dbReference type="SUPFAM" id="SSF51197">
    <property type="entry name" value="Clavaminate synthase-like"/>
    <property type="match status" value="1"/>
</dbReference>
<dbReference type="PROSITE" id="PS51184">
    <property type="entry name" value="JMJC"/>
    <property type="match status" value="1"/>
</dbReference>
<organism evidence="11">
    <name type="scientific">Drosophila melanogaster</name>
    <name type="common">Fruit fly</name>
    <dbReference type="NCBI Taxonomy" id="7227"/>
    <lineage>
        <taxon>Eukaryota</taxon>
        <taxon>Metazoa</taxon>
        <taxon>Ecdysozoa</taxon>
        <taxon>Arthropoda</taxon>
        <taxon>Hexapoda</taxon>
        <taxon>Insecta</taxon>
        <taxon>Pterygota</taxon>
        <taxon>Neoptera</taxon>
        <taxon>Endopterygota</taxon>
        <taxon>Diptera</taxon>
        <taxon>Brachycera</taxon>
        <taxon>Muscomorpha</taxon>
        <taxon>Ephydroidea</taxon>
        <taxon>Drosophilidae</taxon>
        <taxon>Drosophila</taxon>
        <taxon>Sophophora</taxon>
    </lineage>
</organism>
<proteinExistence type="evidence at protein level"/>
<keyword id="KW-0002">3D-structure</keyword>
<keyword id="KW-0963">Cytoplasm</keyword>
<keyword id="KW-1015">Disulfide bond</keyword>
<keyword id="KW-0378">Hydrolase</keyword>
<keyword id="KW-0408">Iron</keyword>
<keyword id="KW-0479">Metal-binding</keyword>
<keyword id="KW-0539">Nucleus</keyword>
<keyword id="KW-0558">Oxidation</keyword>
<keyword id="KW-0560">Oxidoreductase</keyword>
<keyword id="KW-1185">Reference proteome</keyword>
<sequence length="316" mass="36088">MSEVERALDVLLQEAEELCIGSSVVELDRIPTALEFCREFYSKNQPVVIRKALNWPAIGKWTPKYLIEALGDRSVDVAITPNGYADGLATQNGQEYFVLPLETKMKLSEVVRRLDDPTGAVHYIQKQNSNLSVDLPELAADLRVSDLDFAQQSFNKPPDAVNFWLGDERAVTSMHKDPYENVYCVISGHKDFVLIPPHQLSCVPRGIYPTGVYKTSDSGQFYIEPLRDEEGSDQFTEWVSVDPLSPDLAKYPEYARAKPLKVRVHAGDILYLPNYWFHHVSQSHKCIAVNFWYDLDYDSRYCYYRMLEQMTSARSG</sequence>
<protein>
    <recommendedName>
        <fullName evidence="1">Bifunctional peptidase and (3S)-lysyl hydroxylase JMJD7</fullName>
        <ecNumber evidence="6">1.14.11.63</ecNumber>
        <ecNumber evidence="1">3.4.-.-</ecNumber>
    </recommendedName>
    <alternativeName>
        <fullName evidence="10">Jumonji domain containing protein 7</fullName>
    </alternativeName>
</protein>
<feature type="chain" id="PRO_0000462173" description="Bifunctional peptidase and (3S)-lysyl hydroxylase JMJD7">
    <location>
        <begin position="1"/>
        <end position="316"/>
    </location>
</feature>
<feature type="domain" description="JmjC" evidence="2">
    <location>
        <begin position="124"/>
        <end position="310"/>
    </location>
</feature>
<feature type="binding site" evidence="6 12">
    <location>
        <position position="123"/>
    </location>
    <ligand>
        <name>2-oxoglutarate</name>
        <dbReference type="ChEBI" id="CHEBI:16810"/>
    </ligand>
</feature>
<feature type="binding site" evidence="6 13">
    <location>
        <position position="123"/>
    </location>
    <ligand>
        <name>succinate</name>
        <dbReference type="ChEBI" id="CHEBI:30031"/>
    </ligand>
</feature>
<feature type="binding site" evidence="6 12">
    <location>
        <position position="172"/>
    </location>
    <ligand>
        <name>2-oxoglutarate</name>
        <dbReference type="ChEBI" id="CHEBI:16810"/>
    </ligand>
</feature>
<feature type="binding site" evidence="2 8 12 13 14 15 16 17">
    <location>
        <position position="175"/>
    </location>
    <ligand>
        <name>Fe cation</name>
        <dbReference type="ChEBI" id="CHEBI:24875"/>
        <note>catalytic</note>
    </ligand>
</feature>
<feature type="binding site" evidence="2 8 12 13 14 15 16 17">
    <location>
        <position position="177"/>
    </location>
    <ligand>
        <name>Fe cation</name>
        <dbReference type="ChEBI" id="CHEBI:24875"/>
        <note>catalytic</note>
    </ligand>
</feature>
<feature type="binding site" evidence="6 12">
    <location>
        <position position="181"/>
    </location>
    <ligand>
        <name>2-oxoglutarate</name>
        <dbReference type="ChEBI" id="CHEBI:16810"/>
    </ligand>
</feature>
<feature type="binding site" evidence="6 12">
    <location>
        <position position="183"/>
    </location>
    <ligand>
        <name>2-oxoglutarate</name>
        <dbReference type="ChEBI" id="CHEBI:16810"/>
    </ligand>
</feature>
<feature type="binding site" evidence="6 13">
    <location>
        <position position="183"/>
    </location>
    <ligand>
        <name>succinate</name>
        <dbReference type="ChEBI" id="CHEBI:30031"/>
    </ligand>
</feature>
<feature type="binding site" evidence="6 12">
    <location>
        <position position="190"/>
    </location>
    <ligand>
        <name>2-oxoglutarate</name>
        <dbReference type="ChEBI" id="CHEBI:16810"/>
    </ligand>
</feature>
<feature type="binding site" evidence="6 13">
    <location>
        <position position="190"/>
    </location>
    <ligand>
        <name>succinate</name>
        <dbReference type="ChEBI" id="CHEBI:30031"/>
    </ligand>
</feature>
<feature type="binding site" evidence="2 8 12 13 14 15 16 17">
    <location>
        <position position="278"/>
    </location>
    <ligand>
        <name>Fe cation</name>
        <dbReference type="ChEBI" id="CHEBI:24875"/>
        <note>catalytic</note>
    </ligand>
</feature>
<feature type="binding site" evidence="6 12">
    <location>
        <position position="292"/>
    </location>
    <ligand>
        <name>2-oxoglutarate</name>
        <dbReference type="ChEBI" id="CHEBI:16810"/>
    </ligand>
</feature>
<feature type="modified residue" description="Cysteine sulfenic acid (-SOH)" evidence="15 16 17">
    <location>
        <position position="19"/>
    </location>
</feature>
<feature type="disulfide bond" description="Interchain" evidence="6">
    <location>
        <position position="37"/>
    </location>
</feature>
<gene>
    <name evidence="10" type="primary">JMJD7</name>
    <name evidence="10" type="ORF">CG10133</name>
</gene>
<name>JMJD7_DROME</name>
<comment type="function">
    <text evidence="1 5 6">Bifunctional enzyme that acts both as an endopeptidase and 2-oxoglutarate-dependent monooxygenase (PubMed:35410347). Endopeptidase that cleaves histones N-terminal tails at the carboxyl side of methylated arginine or lysine residues, to generate 'tailless nucleosomes', which may trigger transcription elongation (By similarity). Hydroxylates the guanylate binding protein 128up (PubMed:35410347). May be involved in regulation of behavior and circadian rhythms (PubMed:29339751).</text>
</comment>
<comment type="catalytic activity">
    <reaction evidence="6">
        <text>L-lysyl-[protein] + 2-oxoglutarate + O2 = (3S)-3-hydroxy-L-lysyl-[protein] + succinate + CO2</text>
        <dbReference type="Rhea" id="RHEA:57152"/>
        <dbReference type="Rhea" id="RHEA-COMP:9752"/>
        <dbReference type="Rhea" id="RHEA-COMP:15133"/>
        <dbReference type="ChEBI" id="CHEBI:15379"/>
        <dbReference type="ChEBI" id="CHEBI:16526"/>
        <dbReference type="ChEBI" id="CHEBI:16810"/>
        <dbReference type="ChEBI" id="CHEBI:29969"/>
        <dbReference type="ChEBI" id="CHEBI:30031"/>
        <dbReference type="ChEBI" id="CHEBI:141492"/>
        <dbReference type="EC" id="1.14.11.63"/>
    </reaction>
    <physiologicalReaction direction="left-to-right" evidence="6">
        <dbReference type="Rhea" id="RHEA:57153"/>
    </physiologicalReaction>
</comment>
<comment type="cofactor">
    <cofactor evidence="6">
        <name>Fe(2+)</name>
        <dbReference type="ChEBI" id="CHEBI:29033"/>
    </cofactor>
</comment>
<comment type="subunit">
    <text evidence="6">Homodimer; disulfide-linked.</text>
</comment>
<comment type="subcellular location">
    <subcellularLocation>
        <location evidence="3">Nucleus</location>
    </subcellularLocation>
    <subcellularLocation>
        <location evidence="3">Cytoplasm</location>
    </subcellularLocation>
</comment>
<comment type="tissue specificity">
    <text evidence="5">Expressed in the pars intercerebralis and fan-shaped body, regions known to be involved in sleep.</text>
</comment>
<comment type="disruption phenotype">
    <text evidence="3 4 5">Viable (PubMed:28701701). Adults possess disrupted circadian rhythms displaying reduced daytime sleep (PubMed:29339751). Adults show decreased tolerance buildup following repeated ethanol exposure (PubMed:28940624).</text>
</comment>
<reference evidence="11" key="1">
    <citation type="journal article" date="2000" name="Science">
        <title>The genome sequence of Drosophila melanogaster.</title>
        <authorList>
            <person name="Adams M.D."/>
            <person name="Celniker S.E."/>
            <person name="Holt R.A."/>
            <person name="Evans C.A."/>
            <person name="Gocayne J.D."/>
            <person name="Amanatides P.G."/>
            <person name="Scherer S.E."/>
            <person name="Li P.W."/>
            <person name="Hoskins R.A."/>
            <person name="Galle R.F."/>
            <person name="George R.A."/>
            <person name="Lewis S.E."/>
            <person name="Richards S."/>
            <person name="Ashburner M."/>
            <person name="Henderson S.N."/>
            <person name="Sutton G.G."/>
            <person name="Wortman J.R."/>
            <person name="Yandell M.D."/>
            <person name="Zhang Q."/>
            <person name="Chen L.X."/>
            <person name="Brandon R.C."/>
            <person name="Rogers Y.-H.C."/>
            <person name="Blazej R.G."/>
            <person name="Champe M."/>
            <person name="Pfeiffer B.D."/>
            <person name="Wan K.H."/>
            <person name="Doyle C."/>
            <person name="Baxter E.G."/>
            <person name="Helt G."/>
            <person name="Nelson C.R."/>
            <person name="Miklos G.L.G."/>
            <person name="Abril J.F."/>
            <person name="Agbayani A."/>
            <person name="An H.-J."/>
            <person name="Andrews-Pfannkoch C."/>
            <person name="Baldwin D."/>
            <person name="Ballew R.M."/>
            <person name="Basu A."/>
            <person name="Baxendale J."/>
            <person name="Bayraktaroglu L."/>
            <person name="Beasley E.M."/>
            <person name="Beeson K.Y."/>
            <person name="Benos P.V."/>
            <person name="Berman B.P."/>
            <person name="Bhandari D."/>
            <person name="Bolshakov S."/>
            <person name="Borkova D."/>
            <person name="Botchan M.R."/>
            <person name="Bouck J."/>
            <person name="Brokstein P."/>
            <person name="Brottier P."/>
            <person name="Burtis K.C."/>
            <person name="Busam D.A."/>
            <person name="Butler H."/>
            <person name="Cadieu E."/>
            <person name="Center A."/>
            <person name="Chandra I."/>
            <person name="Cherry J.M."/>
            <person name="Cawley S."/>
            <person name="Dahlke C."/>
            <person name="Davenport L.B."/>
            <person name="Davies P."/>
            <person name="de Pablos B."/>
            <person name="Delcher A."/>
            <person name="Deng Z."/>
            <person name="Mays A.D."/>
            <person name="Dew I."/>
            <person name="Dietz S.M."/>
            <person name="Dodson K."/>
            <person name="Doup L.E."/>
            <person name="Downes M."/>
            <person name="Dugan-Rocha S."/>
            <person name="Dunkov B.C."/>
            <person name="Dunn P."/>
            <person name="Durbin K.J."/>
            <person name="Evangelista C.C."/>
            <person name="Ferraz C."/>
            <person name="Ferriera S."/>
            <person name="Fleischmann W."/>
            <person name="Fosler C."/>
            <person name="Gabrielian A.E."/>
            <person name="Garg N.S."/>
            <person name="Gelbart W.M."/>
            <person name="Glasser K."/>
            <person name="Glodek A."/>
            <person name="Gong F."/>
            <person name="Gorrell J.H."/>
            <person name="Gu Z."/>
            <person name="Guan P."/>
            <person name="Harris M."/>
            <person name="Harris N.L."/>
            <person name="Harvey D.A."/>
            <person name="Heiman T.J."/>
            <person name="Hernandez J.R."/>
            <person name="Houck J."/>
            <person name="Hostin D."/>
            <person name="Houston K.A."/>
            <person name="Howland T.J."/>
            <person name="Wei M.-H."/>
            <person name="Ibegwam C."/>
            <person name="Jalali M."/>
            <person name="Kalush F."/>
            <person name="Karpen G.H."/>
            <person name="Ke Z."/>
            <person name="Kennison J.A."/>
            <person name="Ketchum K.A."/>
            <person name="Kimmel B.E."/>
            <person name="Kodira C.D."/>
            <person name="Kraft C.L."/>
            <person name="Kravitz S."/>
            <person name="Kulp D."/>
            <person name="Lai Z."/>
            <person name="Lasko P."/>
            <person name="Lei Y."/>
            <person name="Levitsky A.A."/>
            <person name="Li J.H."/>
            <person name="Li Z."/>
            <person name="Liang Y."/>
            <person name="Lin X."/>
            <person name="Liu X."/>
            <person name="Mattei B."/>
            <person name="McIntosh T.C."/>
            <person name="McLeod M.P."/>
            <person name="McPherson D."/>
            <person name="Merkulov G."/>
            <person name="Milshina N.V."/>
            <person name="Mobarry C."/>
            <person name="Morris J."/>
            <person name="Moshrefi A."/>
            <person name="Mount S.M."/>
            <person name="Moy M."/>
            <person name="Murphy B."/>
            <person name="Murphy L."/>
            <person name="Muzny D.M."/>
            <person name="Nelson D.L."/>
            <person name="Nelson D.R."/>
            <person name="Nelson K.A."/>
            <person name="Nixon K."/>
            <person name="Nusskern D.R."/>
            <person name="Pacleb J.M."/>
            <person name="Palazzolo M."/>
            <person name="Pittman G.S."/>
            <person name="Pan S."/>
            <person name="Pollard J."/>
            <person name="Puri V."/>
            <person name="Reese M.G."/>
            <person name="Reinert K."/>
            <person name="Remington K."/>
            <person name="Saunders R.D.C."/>
            <person name="Scheeler F."/>
            <person name="Shen H."/>
            <person name="Shue B.C."/>
            <person name="Siden-Kiamos I."/>
            <person name="Simpson M."/>
            <person name="Skupski M.P."/>
            <person name="Smith T.J."/>
            <person name="Spier E."/>
            <person name="Spradling A.C."/>
            <person name="Stapleton M."/>
            <person name="Strong R."/>
            <person name="Sun E."/>
            <person name="Svirskas R."/>
            <person name="Tector C."/>
            <person name="Turner R."/>
            <person name="Venter E."/>
            <person name="Wang A.H."/>
            <person name="Wang X."/>
            <person name="Wang Z.-Y."/>
            <person name="Wassarman D.A."/>
            <person name="Weinstock G.M."/>
            <person name="Weissenbach J."/>
            <person name="Williams S.M."/>
            <person name="Woodage T."/>
            <person name="Worley K.C."/>
            <person name="Wu D."/>
            <person name="Yang S."/>
            <person name="Yao Q.A."/>
            <person name="Ye J."/>
            <person name="Yeh R.-F."/>
            <person name="Zaveri J.S."/>
            <person name="Zhan M."/>
            <person name="Zhang G."/>
            <person name="Zhao Q."/>
            <person name="Zheng L."/>
            <person name="Zheng X.H."/>
            <person name="Zhong F.N."/>
            <person name="Zhong W."/>
            <person name="Zhou X."/>
            <person name="Zhu S.C."/>
            <person name="Zhu X."/>
            <person name="Smith H.O."/>
            <person name="Gibbs R.A."/>
            <person name="Myers E.W."/>
            <person name="Rubin G.M."/>
            <person name="Venter J.C."/>
        </authorList>
    </citation>
    <scope>NUCLEOTIDE SEQUENCE [LARGE SCALE GENOMIC DNA]</scope>
    <source>
        <strain evidence="11">Berkeley</strain>
    </source>
</reference>
<reference evidence="11" key="2">
    <citation type="journal article" date="2002" name="Genome Biol.">
        <title>Annotation of the Drosophila melanogaster euchromatic genome: a systematic review.</title>
        <authorList>
            <person name="Misra S."/>
            <person name="Crosby M.A."/>
            <person name="Mungall C.J."/>
            <person name="Matthews B.B."/>
            <person name="Campbell K.S."/>
            <person name="Hradecky P."/>
            <person name="Huang Y."/>
            <person name="Kaminker J.S."/>
            <person name="Millburn G.H."/>
            <person name="Prochnik S.E."/>
            <person name="Smith C.D."/>
            <person name="Tupy J.L."/>
            <person name="Whitfield E.J."/>
            <person name="Bayraktaroglu L."/>
            <person name="Berman B.P."/>
            <person name="Bettencourt B.R."/>
            <person name="Celniker S.E."/>
            <person name="de Grey A.D.N.J."/>
            <person name="Drysdale R.A."/>
            <person name="Harris N.L."/>
            <person name="Richter J."/>
            <person name="Russo S."/>
            <person name="Schroeder A.J."/>
            <person name="Shu S.Q."/>
            <person name="Stapleton M."/>
            <person name="Yamada C."/>
            <person name="Ashburner M."/>
            <person name="Gelbart W.M."/>
            <person name="Rubin G.M."/>
            <person name="Lewis S.E."/>
        </authorList>
    </citation>
    <scope>GENOME REANNOTATION</scope>
    <source>
        <strain evidence="11">Berkeley</strain>
    </source>
</reference>
<reference evidence="9" key="3">
    <citation type="journal article" date="2002" name="Genome Biol.">
        <title>A Drosophila full-length cDNA resource.</title>
        <authorList>
            <person name="Stapleton M."/>
            <person name="Carlson J.W."/>
            <person name="Brokstein P."/>
            <person name="Yu C."/>
            <person name="Champe M."/>
            <person name="George R.A."/>
            <person name="Guarin H."/>
            <person name="Kronmiller B."/>
            <person name="Pacleb J.M."/>
            <person name="Park S."/>
            <person name="Wan K.H."/>
            <person name="Rubin G.M."/>
            <person name="Celniker S.E."/>
        </authorList>
    </citation>
    <scope>NUCLEOTIDE SEQUENCE [LARGE SCALE MRNA]</scope>
    <source>
        <strain evidence="9">Berkeley</strain>
        <tissue evidence="9">Head</tissue>
    </source>
</reference>
<reference evidence="7" key="4">
    <citation type="journal article" date="2017" name="Alcohol. Clin. Exp. Res.">
        <title>Alcohol-Induced Behaviors Require a Subset of Drosophila JmjC-Domain Histone Demethylases in the Nervous System.</title>
        <authorList>
            <person name="Pinzon J.H."/>
            <person name="Reed A.R."/>
            <person name="Shalaby N.A."/>
            <person name="Buszczak M."/>
            <person name="Rodan A.R."/>
            <person name="Rothenfluh A."/>
        </authorList>
    </citation>
    <scope>DISRUPTION PHENOTYPE</scope>
</reference>
<reference evidence="7" key="5">
    <citation type="journal article" date="2017" name="Sci. Rep.">
        <title>Systematic discovery of genetic modulation by Jumonji histone demethylases in Drosophila.</title>
        <authorList>
            <person name="Shalaby N.A."/>
            <person name="Sayed R."/>
            <person name="Zhang Q."/>
            <person name="Scoggin S."/>
            <person name="Eliazer S."/>
            <person name="Rothenfluh A."/>
            <person name="Buszczak M."/>
        </authorList>
    </citation>
    <scope>SUBCELLULAR LOCATION</scope>
    <scope>DISRUPTION PHENOTYPE</scope>
</reference>
<reference evidence="7" key="6">
    <citation type="journal article" date="2018" name="Sci. Rep.">
        <title>JmjC domain proteins modulate circadian behaviors and sleep in Drosophila.</title>
        <authorList>
            <person name="Shalaby N.A."/>
            <person name="Pinzon J.H."/>
            <person name="Narayanan A.S."/>
            <person name="Jin E.J."/>
            <person name="Ritz M.P."/>
            <person name="Dove R.J."/>
            <person name="Wolfenberg H."/>
            <person name="Rodan A.R."/>
            <person name="Buszczak M."/>
            <person name="Rothenfluh A."/>
        </authorList>
    </citation>
    <scope>FUNCTION</scope>
    <scope>TISSUE SPECIFICITY</scope>
    <scope>DISRUPTION PHENOTYPE</scope>
</reference>
<reference evidence="12 13 14 15 16 17" key="7">
    <citation type="journal article" date="2022" name="Sci. Rep.">
        <title>Conservation of the unusual dimeric JmjC fold of JMJD7 from Drosophila melanogaster to humans.</title>
        <authorList>
            <person name="Chowdhury R."/>
            <person name="Abboud M.I."/>
            <person name="Wiley J."/>
            <person name="Tumber A."/>
            <person name="Markolovic S."/>
            <person name="Schofield C.J."/>
        </authorList>
    </citation>
    <scope>X-RAY CRYSTALLOGRAPHY (1.64 ANGSTROMS) IN COMPLEX WITH 2-OXOGLUTARATE; MN(2+); SUCCINATE; N-OXALYLGLYCINE; N-OXALYL-D-ALANINE; N-OXALYL-D-PHENYLALANINE AND LUTIDINIC ACID</scope>
    <scope>FUNCTION</scope>
    <scope>CATALYTIC ACTIVITY</scope>
    <scope>COFACTOR</scope>
    <scope>SUBUNIT</scope>
    <scope>DISULFIDE BOND</scope>
    <scope>OXIDATION AT CYS-19</scope>
</reference>